<comment type="function">
    <text evidence="1">Assembles around the rod to form the L-ring and probably protects the motor/basal body from shearing forces during rotation.</text>
</comment>
<comment type="subunit">
    <text evidence="1">The basal body constitutes a major portion of the flagellar organelle and consists of four rings (L,P,S, and M) mounted on a central rod.</text>
</comment>
<comment type="subcellular location">
    <subcellularLocation>
        <location evidence="1">Periplasm</location>
    </subcellularLocation>
    <subcellularLocation>
        <location evidence="1">Bacterial flagellum basal body</location>
    </subcellularLocation>
</comment>
<comment type="similarity">
    <text evidence="1">Belongs to the FlgI family.</text>
</comment>
<accession>B7M956</accession>
<organism>
    <name type="scientific">Escherichia coli O8 (strain IAI1)</name>
    <dbReference type="NCBI Taxonomy" id="585034"/>
    <lineage>
        <taxon>Bacteria</taxon>
        <taxon>Pseudomonadati</taxon>
        <taxon>Pseudomonadota</taxon>
        <taxon>Gammaproteobacteria</taxon>
        <taxon>Enterobacterales</taxon>
        <taxon>Enterobacteriaceae</taxon>
        <taxon>Escherichia</taxon>
    </lineage>
</organism>
<keyword id="KW-0975">Bacterial flagellum</keyword>
<keyword id="KW-0574">Periplasm</keyword>
<keyword id="KW-0732">Signal</keyword>
<name>FLGI_ECO8A</name>
<evidence type="ECO:0000255" key="1">
    <source>
        <dbReference type="HAMAP-Rule" id="MF_00416"/>
    </source>
</evidence>
<gene>
    <name evidence="1" type="primary">flgI</name>
    <name type="ordered locus">ECIAI1_1116</name>
</gene>
<sequence length="365" mass="38169">MIKFLSALILLLVTTAAQAERIRDLTSVQGVRQNSLIGYGLVVGLDGTGDQTTQTPFTTQTLNNMLSQLGITVPTGTNMQLKNVAAVMVTASLPPFGRQGQTIDVVVSSMGNAKSLRGGTLLMTPLKGVDSQVYALAQGNILVGGAGASAGGSSVQVNQLNGGRITNGAVIERELPSQFGVGNTLNLQLNDEDFSMAQQIADTINRVRGYGSATALDARTIQVRVPSGNSSQVRFLADIQNMQVNVTPQDAKVVINSRTGSVVMNREVTLDSCAVAQGNLSVTVNRQANVSQPDTPFGGGQTVVTPQTQIDLRQSGGSLQSVRSSASLNNVVRALNALGATPMDLMSILQSMQSAGCLRAKLEII</sequence>
<reference key="1">
    <citation type="journal article" date="2009" name="PLoS Genet.">
        <title>Organised genome dynamics in the Escherichia coli species results in highly diverse adaptive paths.</title>
        <authorList>
            <person name="Touchon M."/>
            <person name="Hoede C."/>
            <person name="Tenaillon O."/>
            <person name="Barbe V."/>
            <person name="Baeriswyl S."/>
            <person name="Bidet P."/>
            <person name="Bingen E."/>
            <person name="Bonacorsi S."/>
            <person name="Bouchier C."/>
            <person name="Bouvet O."/>
            <person name="Calteau A."/>
            <person name="Chiapello H."/>
            <person name="Clermont O."/>
            <person name="Cruveiller S."/>
            <person name="Danchin A."/>
            <person name="Diard M."/>
            <person name="Dossat C."/>
            <person name="Karoui M.E."/>
            <person name="Frapy E."/>
            <person name="Garry L."/>
            <person name="Ghigo J.M."/>
            <person name="Gilles A.M."/>
            <person name="Johnson J."/>
            <person name="Le Bouguenec C."/>
            <person name="Lescat M."/>
            <person name="Mangenot S."/>
            <person name="Martinez-Jehanne V."/>
            <person name="Matic I."/>
            <person name="Nassif X."/>
            <person name="Oztas S."/>
            <person name="Petit M.A."/>
            <person name="Pichon C."/>
            <person name="Rouy Z."/>
            <person name="Ruf C.S."/>
            <person name="Schneider D."/>
            <person name="Tourret J."/>
            <person name="Vacherie B."/>
            <person name="Vallenet D."/>
            <person name="Medigue C."/>
            <person name="Rocha E.P.C."/>
            <person name="Denamur E."/>
        </authorList>
    </citation>
    <scope>NUCLEOTIDE SEQUENCE [LARGE SCALE GENOMIC DNA]</scope>
    <source>
        <strain>IAI1</strain>
    </source>
</reference>
<dbReference type="EMBL" id="CU928160">
    <property type="protein sequence ID" value="CAQ97980.1"/>
    <property type="molecule type" value="Genomic_DNA"/>
</dbReference>
<dbReference type="RefSeq" id="WP_000589326.1">
    <property type="nucleotide sequence ID" value="NC_011741.1"/>
</dbReference>
<dbReference type="SMR" id="B7M956"/>
<dbReference type="GeneID" id="75203667"/>
<dbReference type="KEGG" id="ecr:ECIAI1_1116"/>
<dbReference type="HOGENOM" id="CLU_045235_1_0_6"/>
<dbReference type="GO" id="GO:0009428">
    <property type="term" value="C:bacterial-type flagellum basal body, distal rod, P ring"/>
    <property type="evidence" value="ECO:0007669"/>
    <property type="project" value="InterPro"/>
</dbReference>
<dbReference type="GO" id="GO:0030288">
    <property type="term" value="C:outer membrane-bounded periplasmic space"/>
    <property type="evidence" value="ECO:0007669"/>
    <property type="project" value="InterPro"/>
</dbReference>
<dbReference type="GO" id="GO:0005198">
    <property type="term" value="F:structural molecule activity"/>
    <property type="evidence" value="ECO:0007669"/>
    <property type="project" value="InterPro"/>
</dbReference>
<dbReference type="GO" id="GO:0071973">
    <property type="term" value="P:bacterial-type flagellum-dependent cell motility"/>
    <property type="evidence" value="ECO:0007669"/>
    <property type="project" value="InterPro"/>
</dbReference>
<dbReference type="HAMAP" id="MF_00416">
    <property type="entry name" value="FlgI"/>
    <property type="match status" value="1"/>
</dbReference>
<dbReference type="InterPro" id="IPR001782">
    <property type="entry name" value="Flag_FlgI"/>
</dbReference>
<dbReference type="NCBIfam" id="NF003676">
    <property type="entry name" value="PRK05303.1"/>
    <property type="match status" value="1"/>
</dbReference>
<dbReference type="PANTHER" id="PTHR30381">
    <property type="entry name" value="FLAGELLAR P-RING PERIPLASMIC PROTEIN FLGI"/>
    <property type="match status" value="1"/>
</dbReference>
<dbReference type="PANTHER" id="PTHR30381:SF0">
    <property type="entry name" value="FLAGELLAR P-RING PROTEIN"/>
    <property type="match status" value="1"/>
</dbReference>
<dbReference type="Pfam" id="PF02119">
    <property type="entry name" value="FlgI"/>
    <property type="match status" value="1"/>
</dbReference>
<dbReference type="PRINTS" id="PR01010">
    <property type="entry name" value="FLGPRINGFLGI"/>
</dbReference>
<feature type="signal peptide" evidence="1">
    <location>
        <begin position="1"/>
        <end position="19"/>
    </location>
</feature>
<feature type="chain" id="PRO_1000123970" description="Flagellar P-ring protein">
    <location>
        <begin position="20"/>
        <end position="365"/>
    </location>
</feature>
<protein>
    <recommendedName>
        <fullName evidence="1">Flagellar P-ring protein</fullName>
    </recommendedName>
    <alternativeName>
        <fullName evidence="1">Basal body P-ring protein</fullName>
    </alternativeName>
</protein>
<proteinExistence type="inferred from homology"/>